<proteinExistence type="inferred from homology"/>
<keyword id="KW-0963">Cytoplasm</keyword>
<keyword id="KW-0396">Initiation factor</keyword>
<keyword id="KW-0648">Protein biosynthesis</keyword>
<keyword id="KW-1185">Reference proteome</keyword>
<organism>
    <name type="scientific">Mycoplasma genitalium (strain ATCC 33530 / DSM 19775 / NCTC 10195 / G37)</name>
    <name type="common">Mycoplasmoides genitalium</name>
    <dbReference type="NCBI Taxonomy" id="243273"/>
    <lineage>
        <taxon>Bacteria</taxon>
        <taxon>Bacillati</taxon>
        <taxon>Mycoplasmatota</taxon>
        <taxon>Mycoplasmoidales</taxon>
        <taxon>Mycoplasmoidaceae</taxon>
        <taxon>Mycoplasmoides</taxon>
    </lineage>
</organism>
<name>IF3_MYCGE</name>
<feature type="chain" id="PRO_0000177541" description="Translation initiation factor IF-3">
    <location>
        <begin position="1"/>
        <end position="184"/>
    </location>
</feature>
<accession>P47438</accession>
<reference key="1">
    <citation type="journal article" date="1995" name="Science">
        <title>The minimal gene complement of Mycoplasma genitalium.</title>
        <authorList>
            <person name="Fraser C.M."/>
            <person name="Gocayne J.D."/>
            <person name="White O."/>
            <person name="Adams M.D."/>
            <person name="Clayton R.A."/>
            <person name="Fleischmann R.D."/>
            <person name="Bult C.J."/>
            <person name="Kerlavage A.R."/>
            <person name="Sutton G.G."/>
            <person name="Kelley J.M."/>
            <person name="Fritchman J.L."/>
            <person name="Weidman J.F."/>
            <person name="Small K.V."/>
            <person name="Sandusky M."/>
            <person name="Fuhrmann J.L."/>
            <person name="Nguyen D.T."/>
            <person name="Utterback T.R."/>
            <person name="Saudek D.M."/>
            <person name="Phillips C.A."/>
            <person name="Merrick J.M."/>
            <person name="Tomb J.-F."/>
            <person name="Dougherty B.A."/>
            <person name="Bott K.F."/>
            <person name="Hu P.-C."/>
            <person name="Lucier T.S."/>
            <person name="Peterson S.N."/>
            <person name="Smith H.O."/>
            <person name="Hutchison C.A. III"/>
            <person name="Venter J.C."/>
        </authorList>
    </citation>
    <scope>NUCLEOTIDE SEQUENCE [LARGE SCALE GENOMIC DNA]</scope>
    <source>
        <strain>ATCC 33530 / DSM 19775 / NCTC 10195 / G37</strain>
    </source>
</reference>
<dbReference type="EMBL" id="L43967">
    <property type="protein sequence ID" value="AAC71414.1"/>
    <property type="status" value="ALT_INIT"/>
    <property type="molecule type" value="Genomic_DNA"/>
</dbReference>
<dbReference type="RefSeq" id="WP_009885737.1">
    <property type="nucleotide sequence ID" value="NZ_AAGX01000004.1"/>
</dbReference>
<dbReference type="SMR" id="P47438"/>
<dbReference type="FunCoup" id="P47438">
    <property type="interactions" value="192"/>
</dbReference>
<dbReference type="STRING" id="243273.MG_196"/>
<dbReference type="GeneID" id="88282328"/>
<dbReference type="KEGG" id="mge:MG_196"/>
<dbReference type="eggNOG" id="COG0290">
    <property type="taxonomic scope" value="Bacteria"/>
</dbReference>
<dbReference type="HOGENOM" id="CLU_054919_3_2_14"/>
<dbReference type="InParanoid" id="P47438"/>
<dbReference type="OrthoDB" id="397792at2"/>
<dbReference type="Proteomes" id="UP000000807">
    <property type="component" value="Chromosome"/>
</dbReference>
<dbReference type="GO" id="GO:0005829">
    <property type="term" value="C:cytosol"/>
    <property type="evidence" value="ECO:0000318"/>
    <property type="project" value="GO_Central"/>
</dbReference>
<dbReference type="GO" id="GO:0043022">
    <property type="term" value="F:ribosome binding"/>
    <property type="evidence" value="ECO:0000318"/>
    <property type="project" value="GO_Central"/>
</dbReference>
<dbReference type="GO" id="GO:0003743">
    <property type="term" value="F:translation initiation factor activity"/>
    <property type="evidence" value="ECO:0000318"/>
    <property type="project" value="GO_Central"/>
</dbReference>
<dbReference type="GO" id="GO:0032790">
    <property type="term" value="P:ribosome disassembly"/>
    <property type="evidence" value="ECO:0000318"/>
    <property type="project" value="GO_Central"/>
</dbReference>
<dbReference type="Gene3D" id="3.30.110.10">
    <property type="entry name" value="Translation initiation factor 3 (IF-3), C-terminal domain"/>
    <property type="match status" value="1"/>
</dbReference>
<dbReference type="Gene3D" id="3.10.20.80">
    <property type="entry name" value="Translation initiation factor 3 (IF-3), N-terminal domain"/>
    <property type="match status" value="1"/>
</dbReference>
<dbReference type="HAMAP" id="MF_00080">
    <property type="entry name" value="IF_3"/>
    <property type="match status" value="1"/>
</dbReference>
<dbReference type="InterPro" id="IPR036788">
    <property type="entry name" value="T_IF-3_C_sf"/>
</dbReference>
<dbReference type="InterPro" id="IPR036787">
    <property type="entry name" value="T_IF-3_N_sf"/>
</dbReference>
<dbReference type="InterPro" id="IPR019813">
    <property type="entry name" value="Translation_initiation_fac3_CS"/>
</dbReference>
<dbReference type="InterPro" id="IPR001288">
    <property type="entry name" value="Translation_initiation_fac_3"/>
</dbReference>
<dbReference type="InterPro" id="IPR019815">
    <property type="entry name" value="Translation_initiation_fac_3_C"/>
</dbReference>
<dbReference type="InterPro" id="IPR019814">
    <property type="entry name" value="Translation_initiation_fac_3_N"/>
</dbReference>
<dbReference type="NCBIfam" id="TIGR00168">
    <property type="entry name" value="infC"/>
    <property type="match status" value="1"/>
</dbReference>
<dbReference type="PANTHER" id="PTHR10938">
    <property type="entry name" value="TRANSLATION INITIATION FACTOR IF-3"/>
    <property type="match status" value="1"/>
</dbReference>
<dbReference type="PANTHER" id="PTHR10938:SF0">
    <property type="entry name" value="TRANSLATION INITIATION FACTOR IF-3, MITOCHONDRIAL"/>
    <property type="match status" value="1"/>
</dbReference>
<dbReference type="Pfam" id="PF00707">
    <property type="entry name" value="IF3_C"/>
    <property type="match status" value="1"/>
</dbReference>
<dbReference type="Pfam" id="PF05198">
    <property type="entry name" value="IF3_N"/>
    <property type="match status" value="1"/>
</dbReference>
<dbReference type="SUPFAM" id="SSF55200">
    <property type="entry name" value="Translation initiation factor IF3, C-terminal domain"/>
    <property type="match status" value="1"/>
</dbReference>
<dbReference type="SUPFAM" id="SSF54364">
    <property type="entry name" value="Translation initiation factor IF3, N-terminal domain"/>
    <property type="match status" value="1"/>
</dbReference>
<dbReference type="PROSITE" id="PS00938">
    <property type="entry name" value="IF3"/>
    <property type="match status" value="1"/>
</dbReference>
<sequence>MIQLAQNAKHPSKKEQKPLVNEQIAFNQFTLIDENSTNLGIVKMENALKLAQEKQLDLVLIAPNPTKPIVKLLDFGRYTYDLKRKKRQAKKNQTIIQTKEVVVKPTIAKHDLEFRAKQSKNWIEKGHHVKFIVRAFGRVSTRIELIEKVFDDFYQLVKDVVEIQKPLTASSKTMYAALLVPLKR</sequence>
<evidence type="ECO:0000255" key="1">
    <source>
        <dbReference type="HAMAP-Rule" id="MF_00080"/>
    </source>
</evidence>
<evidence type="ECO:0000305" key="2"/>
<gene>
    <name evidence="1" type="primary">infC</name>
    <name type="ordered locus">MG196</name>
</gene>
<protein>
    <recommendedName>
        <fullName evidence="1">Translation initiation factor IF-3</fullName>
    </recommendedName>
</protein>
<comment type="function">
    <text evidence="1">IF-3 binds to the 30S ribosomal subunit and shifts the equilibrium between 70S ribosomes and their 50S and 30S subunits in favor of the free subunits, thus enhancing the availability of 30S subunits on which protein synthesis initiation begins.</text>
</comment>
<comment type="subunit">
    <text evidence="1">Monomer.</text>
</comment>
<comment type="subcellular location">
    <subcellularLocation>
        <location evidence="1">Cytoplasm</location>
    </subcellularLocation>
</comment>
<comment type="similarity">
    <text evidence="1">Belongs to the IF-3 family.</text>
</comment>
<comment type="sequence caution" evidence="2">
    <conflict type="erroneous initiation">
        <sequence resource="EMBL-CDS" id="AAC71414"/>
    </conflict>
</comment>